<comment type="function">
    <text evidence="1">Part of the ABC transporter complex CcmAB involved in the biogenesis of c-type cytochromes; once thought to export heme, this seems not to be the case, but its exact role is uncertain. Responsible for energy coupling to the transport system.</text>
</comment>
<comment type="catalytic activity">
    <reaction evidence="1">
        <text>heme b(in) + ATP + H2O = heme b(out) + ADP + phosphate + H(+)</text>
        <dbReference type="Rhea" id="RHEA:19261"/>
        <dbReference type="ChEBI" id="CHEBI:15377"/>
        <dbReference type="ChEBI" id="CHEBI:15378"/>
        <dbReference type="ChEBI" id="CHEBI:30616"/>
        <dbReference type="ChEBI" id="CHEBI:43474"/>
        <dbReference type="ChEBI" id="CHEBI:60344"/>
        <dbReference type="ChEBI" id="CHEBI:456216"/>
        <dbReference type="EC" id="7.6.2.5"/>
    </reaction>
</comment>
<comment type="subunit">
    <text evidence="1">The complex is composed of two ATP-binding proteins (CcmA) and two transmembrane proteins (CcmB).</text>
</comment>
<comment type="subcellular location">
    <subcellularLocation>
        <location evidence="1">Cell inner membrane</location>
        <topology evidence="1">Peripheral membrane protein</topology>
    </subcellularLocation>
</comment>
<comment type="similarity">
    <text evidence="1">Belongs to the ABC transporter superfamily. CcmA exporter (TC 3.A.1.107) family.</text>
</comment>
<comment type="sequence caution" evidence="2">
    <conflict type="erroneous initiation">
        <sequence resource="EMBL-CDS" id="AAY62110"/>
    </conflict>
</comment>
<sequence length="195" mass="21951">MLSLHQLQFNIEQRNLFNLNITFLPSSITYIKGANGSGKSSLLRMISGIMQPNSGNIYYKNNNINNIPKPYCTYIGHNLGLKLEMTVLENLKFWSEIYNSSETLYAAIHYFKLQDLLDEKCYSLSSGMQKVVAAARLIACQSDLWLLDEVETNLSKENRDLLNNLIVMKANSGGIVLLSSHLESSIKSAQILQLV</sequence>
<protein>
    <recommendedName>
        <fullName evidence="1">Cytochrome c biogenesis ATP-binding export protein CcmA</fullName>
        <ecNumber evidence="1">7.6.2.5</ecNumber>
    </recommendedName>
    <alternativeName>
        <fullName evidence="1">Heme exporter protein A</fullName>
    </alternativeName>
</protein>
<keyword id="KW-0067">ATP-binding</keyword>
<keyword id="KW-0997">Cell inner membrane</keyword>
<keyword id="KW-1003">Cell membrane</keyword>
<keyword id="KW-0201">Cytochrome c-type biogenesis</keyword>
<keyword id="KW-0472">Membrane</keyword>
<keyword id="KW-0547">Nucleotide-binding</keyword>
<keyword id="KW-1278">Translocase</keyword>
<keyword id="KW-0813">Transport</keyword>
<name>CCMA_RICFE</name>
<gene>
    <name evidence="1" type="primary">ccmA</name>
    <name type="ordered locus">RF_1259</name>
</gene>
<reference key="1">
    <citation type="journal article" date="2005" name="PLoS Biol.">
        <title>The genome sequence of Rickettsia felis identifies the first putative conjugative plasmid in an obligate intracellular parasite.</title>
        <authorList>
            <person name="Ogata H."/>
            <person name="Renesto P."/>
            <person name="Audic S."/>
            <person name="Robert C."/>
            <person name="Blanc G."/>
            <person name="Fournier P.-E."/>
            <person name="Parinello H."/>
            <person name="Claverie J.-M."/>
            <person name="Raoult D."/>
        </authorList>
    </citation>
    <scope>NUCLEOTIDE SEQUENCE [LARGE SCALE GENOMIC DNA]</scope>
    <source>
        <strain>ATCC VR-1525 / URRWXCal2</strain>
    </source>
</reference>
<accession>Q4UK25</accession>
<feature type="chain" id="PRO_0000260191" description="Cytochrome c biogenesis ATP-binding export protein CcmA">
    <location>
        <begin position="1"/>
        <end position="195"/>
    </location>
</feature>
<feature type="domain" description="ABC transporter" evidence="1">
    <location>
        <begin position="1"/>
        <end position="195"/>
    </location>
</feature>
<feature type="binding site" evidence="1">
    <location>
        <begin position="33"/>
        <end position="40"/>
    </location>
    <ligand>
        <name>ATP</name>
        <dbReference type="ChEBI" id="CHEBI:30616"/>
    </ligand>
</feature>
<dbReference type="EC" id="7.6.2.5" evidence="1"/>
<dbReference type="EMBL" id="CP000053">
    <property type="protein sequence ID" value="AAY62110.1"/>
    <property type="status" value="ALT_INIT"/>
    <property type="molecule type" value="Genomic_DNA"/>
</dbReference>
<dbReference type="SMR" id="Q4UK25"/>
<dbReference type="STRING" id="315456.RF_1259"/>
<dbReference type="KEGG" id="rfe:RF_1259"/>
<dbReference type="eggNOG" id="COG4133">
    <property type="taxonomic scope" value="Bacteria"/>
</dbReference>
<dbReference type="HOGENOM" id="CLU_000604_1_2_5"/>
<dbReference type="OrthoDB" id="9800654at2"/>
<dbReference type="Proteomes" id="UP000008548">
    <property type="component" value="Chromosome"/>
</dbReference>
<dbReference type="GO" id="GO:0005886">
    <property type="term" value="C:plasma membrane"/>
    <property type="evidence" value="ECO:0007669"/>
    <property type="project" value="UniProtKB-SubCell"/>
</dbReference>
<dbReference type="GO" id="GO:0015439">
    <property type="term" value="F:ABC-type heme transporter activity"/>
    <property type="evidence" value="ECO:0007669"/>
    <property type="project" value="UniProtKB-EC"/>
</dbReference>
<dbReference type="GO" id="GO:0005524">
    <property type="term" value="F:ATP binding"/>
    <property type="evidence" value="ECO:0007669"/>
    <property type="project" value="UniProtKB-KW"/>
</dbReference>
<dbReference type="GO" id="GO:0016887">
    <property type="term" value="F:ATP hydrolysis activity"/>
    <property type="evidence" value="ECO:0007669"/>
    <property type="project" value="InterPro"/>
</dbReference>
<dbReference type="GO" id="GO:0017004">
    <property type="term" value="P:cytochrome complex assembly"/>
    <property type="evidence" value="ECO:0007669"/>
    <property type="project" value="UniProtKB-KW"/>
</dbReference>
<dbReference type="Gene3D" id="3.40.50.300">
    <property type="entry name" value="P-loop containing nucleotide triphosphate hydrolases"/>
    <property type="match status" value="1"/>
</dbReference>
<dbReference type="InterPro" id="IPR003439">
    <property type="entry name" value="ABC_transporter-like_ATP-bd"/>
</dbReference>
<dbReference type="InterPro" id="IPR005895">
    <property type="entry name" value="ABC_transptr_haem_export_CcmA"/>
</dbReference>
<dbReference type="InterPro" id="IPR027417">
    <property type="entry name" value="P-loop_NTPase"/>
</dbReference>
<dbReference type="NCBIfam" id="TIGR01189">
    <property type="entry name" value="ccmA"/>
    <property type="match status" value="1"/>
</dbReference>
<dbReference type="NCBIfam" id="NF010063">
    <property type="entry name" value="PRK13541.1"/>
    <property type="match status" value="1"/>
</dbReference>
<dbReference type="PANTHER" id="PTHR43499">
    <property type="entry name" value="ABC TRANSPORTER I FAMILY MEMBER 1"/>
    <property type="match status" value="1"/>
</dbReference>
<dbReference type="PANTHER" id="PTHR43499:SF1">
    <property type="entry name" value="ABC TRANSPORTER I FAMILY MEMBER 1"/>
    <property type="match status" value="1"/>
</dbReference>
<dbReference type="Pfam" id="PF00005">
    <property type="entry name" value="ABC_tran"/>
    <property type="match status" value="1"/>
</dbReference>
<dbReference type="SUPFAM" id="SSF52540">
    <property type="entry name" value="P-loop containing nucleoside triphosphate hydrolases"/>
    <property type="match status" value="1"/>
</dbReference>
<dbReference type="PROSITE" id="PS50893">
    <property type="entry name" value="ABC_TRANSPORTER_2"/>
    <property type="match status" value="1"/>
</dbReference>
<dbReference type="PROSITE" id="PS51243">
    <property type="entry name" value="CCMA"/>
    <property type="match status" value="1"/>
</dbReference>
<evidence type="ECO:0000255" key="1">
    <source>
        <dbReference type="HAMAP-Rule" id="MF_01707"/>
    </source>
</evidence>
<evidence type="ECO:0000305" key="2"/>
<proteinExistence type="inferred from homology"/>
<organism>
    <name type="scientific">Rickettsia felis (strain ATCC VR-1525 / URRWXCal2)</name>
    <name type="common">Rickettsia azadi</name>
    <dbReference type="NCBI Taxonomy" id="315456"/>
    <lineage>
        <taxon>Bacteria</taxon>
        <taxon>Pseudomonadati</taxon>
        <taxon>Pseudomonadota</taxon>
        <taxon>Alphaproteobacteria</taxon>
        <taxon>Rickettsiales</taxon>
        <taxon>Rickettsiaceae</taxon>
        <taxon>Rickettsieae</taxon>
        <taxon>Rickettsia</taxon>
        <taxon>spotted fever group</taxon>
    </lineage>
</organism>